<feature type="chain" id="PRO_1000147094" description="Cytidine deaminase">
    <location>
        <begin position="1"/>
        <end position="297"/>
    </location>
</feature>
<feature type="domain" description="CMP/dCMP-type deaminase 1" evidence="2">
    <location>
        <begin position="54"/>
        <end position="174"/>
    </location>
</feature>
<feature type="domain" description="CMP/dCMP-type deaminase 2" evidence="2">
    <location>
        <begin position="192"/>
        <end position="297"/>
    </location>
</feature>
<feature type="active site" description="Proton donor" evidence="1">
    <location>
        <position position="110"/>
    </location>
</feature>
<feature type="binding site" evidence="1">
    <location>
        <begin position="95"/>
        <end position="97"/>
    </location>
    <ligand>
        <name>substrate</name>
    </ligand>
</feature>
<feature type="binding site" evidence="1">
    <location>
        <position position="108"/>
    </location>
    <ligand>
        <name>Zn(2+)</name>
        <dbReference type="ChEBI" id="CHEBI:29105"/>
        <note>catalytic</note>
    </ligand>
</feature>
<feature type="binding site" evidence="1">
    <location>
        <position position="135"/>
    </location>
    <ligand>
        <name>Zn(2+)</name>
        <dbReference type="ChEBI" id="CHEBI:29105"/>
        <note>catalytic</note>
    </ligand>
</feature>
<feature type="binding site" evidence="1">
    <location>
        <position position="138"/>
    </location>
    <ligand>
        <name>Zn(2+)</name>
        <dbReference type="ChEBI" id="CHEBI:29105"/>
        <note>catalytic</note>
    </ligand>
</feature>
<comment type="function">
    <text evidence="1">This enzyme scavenges exogenous and endogenous cytidine and 2'-deoxycytidine for UMP synthesis.</text>
</comment>
<comment type="catalytic activity">
    <reaction evidence="1">
        <text>cytidine + H2O + H(+) = uridine + NH4(+)</text>
        <dbReference type="Rhea" id="RHEA:16069"/>
        <dbReference type="ChEBI" id="CHEBI:15377"/>
        <dbReference type="ChEBI" id="CHEBI:15378"/>
        <dbReference type="ChEBI" id="CHEBI:16704"/>
        <dbReference type="ChEBI" id="CHEBI:17562"/>
        <dbReference type="ChEBI" id="CHEBI:28938"/>
        <dbReference type="EC" id="3.5.4.5"/>
    </reaction>
</comment>
<comment type="catalytic activity">
    <reaction evidence="1">
        <text>2'-deoxycytidine + H2O + H(+) = 2'-deoxyuridine + NH4(+)</text>
        <dbReference type="Rhea" id="RHEA:13433"/>
        <dbReference type="ChEBI" id="CHEBI:15377"/>
        <dbReference type="ChEBI" id="CHEBI:15378"/>
        <dbReference type="ChEBI" id="CHEBI:15698"/>
        <dbReference type="ChEBI" id="CHEBI:16450"/>
        <dbReference type="ChEBI" id="CHEBI:28938"/>
        <dbReference type="EC" id="3.5.4.5"/>
    </reaction>
</comment>
<comment type="cofactor">
    <cofactor evidence="1">
        <name>Zn(2+)</name>
        <dbReference type="ChEBI" id="CHEBI:29105"/>
    </cofactor>
    <text evidence="1">Binds 1 zinc ion.</text>
</comment>
<comment type="subunit">
    <text evidence="1">Homodimer.</text>
</comment>
<comment type="similarity">
    <text evidence="1">Belongs to the cytidine and deoxycytidylate deaminase family.</text>
</comment>
<proteinExistence type="inferred from homology"/>
<protein>
    <recommendedName>
        <fullName evidence="1">Cytidine deaminase</fullName>
        <ecNumber evidence="1">3.5.4.5</ecNumber>
    </recommendedName>
    <alternativeName>
        <fullName evidence="1">Cytidine aminohydrolase</fullName>
        <shortName evidence="1">CDA</shortName>
    </alternativeName>
</protein>
<keyword id="KW-0378">Hydrolase</keyword>
<keyword id="KW-0479">Metal-binding</keyword>
<keyword id="KW-0862">Zinc</keyword>
<accession>B0BQT2</accession>
<organism>
    <name type="scientific">Actinobacillus pleuropneumoniae serotype 3 (strain JL03)</name>
    <dbReference type="NCBI Taxonomy" id="434271"/>
    <lineage>
        <taxon>Bacteria</taxon>
        <taxon>Pseudomonadati</taxon>
        <taxon>Pseudomonadota</taxon>
        <taxon>Gammaproteobacteria</taxon>
        <taxon>Pasteurellales</taxon>
        <taxon>Pasteurellaceae</taxon>
        <taxon>Actinobacillus</taxon>
    </lineage>
</organism>
<evidence type="ECO:0000255" key="1">
    <source>
        <dbReference type="HAMAP-Rule" id="MF_01558"/>
    </source>
</evidence>
<evidence type="ECO:0000255" key="2">
    <source>
        <dbReference type="PROSITE-ProRule" id="PRU01083"/>
    </source>
</evidence>
<reference key="1">
    <citation type="journal article" date="2008" name="PLoS ONE">
        <title>Genome biology of Actinobacillus pleuropneumoniae JL03, an isolate of serotype 3 prevalent in China.</title>
        <authorList>
            <person name="Xu Z."/>
            <person name="Zhou Y."/>
            <person name="Li L."/>
            <person name="Zhou R."/>
            <person name="Xiao S."/>
            <person name="Wan Y."/>
            <person name="Zhang S."/>
            <person name="Wang K."/>
            <person name="Li W."/>
            <person name="Li L."/>
            <person name="Jin H."/>
            <person name="Kang M."/>
            <person name="Dalai B."/>
            <person name="Li T."/>
            <person name="Liu L."/>
            <person name="Cheng Y."/>
            <person name="Zhang L."/>
            <person name="Xu T."/>
            <person name="Zheng H."/>
            <person name="Pu S."/>
            <person name="Wang B."/>
            <person name="Gu W."/>
            <person name="Zhang X.L."/>
            <person name="Zhu G.-F."/>
            <person name="Wang S."/>
            <person name="Zhao G.-P."/>
            <person name="Chen H."/>
        </authorList>
    </citation>
    <scope>NUCLEOTIDE SEQUENCE [LARGE SCALE GENOMIC DNA]</scope>
    <source>
        <strain>JL03</strain>
    </source>
</reference>
<sequence length="297" mass="32812">MPTLFALKERIAQVVQEKNDPIVTAVATTLAEQQYNACFSAEQVKLWKRQFKCSSVELALACLPIAACYALVPISNFYVGAVAIGESGRFYFGANQEFNAQAIQQTVHAEQSAISHAWLAGETAITDMVVNYTPCGHCRQFMNELNSAKTLKIHLPHSQNNLLRQYLPDSFGPKDLNIEKVLFDQQTHSLPLRGDLLTQAAIQTAAQSYAPYSKSLSGIALQVGEQIICGRYAENAAFNPSFLPLQSALNYRRLSGKSDERISRIVMAESKGTTSHRQMSEALAESFLGLNLEYIEV</sequence>
<dbReference type="EC" id="3.5.4.5" evidence="1"/>
<dbReference type="EMBL" id="CP000687">
    <property type="protein sequence ID" value="ABY69917.1"/>
    <property type="molecule type" value="Genomic_DNA"/>
</dbReference>
<dbReference type="RefSeq" id="WP_005598450.1">
    <property type="nucleotide sequence ID" value="NC_010278.1"/>
</dbReference>
<dbReference type="SMR" id="B0BQT2"/>
<dbReference type="GeneID" id="48599594"/>
<dbReference type="KEGG" id="apj:APJL_1361"/>
<dbReference type="HOGENOM" id="CLU_052424_0_0_6"/>
<dbReference type="Proteomes" id="UP000008547">
    <property type="component" value="Chromosome"/>
</dbReference>
<dbReference type="GO" id="GO:0005829">
    <property type="term" value="C:cytosol"/>
    <property type="evidence" value="ECO:0007669"/>
    <property type="project" value="TreeGrafter"/>
</dbReference>
<dbReference type="GO" id="GO:0004126">
    <property type="term" value="F:cytidine deaminase activity"/>
    <property type="evidence" value="ECO:0007669"/>
    <property type="project" value="UniProtKB-UniRule"/>
</dbReference>
<dbReference type="GO" id="GO:0042802">
    <property type="term" value="F:identical protein binding"/>
    <property type="evidence" value="ECO:0007669"/>
    <property type="project" value="UniProtKB-ARBA"/>
</dbReference>
<dbReference type="GO" id="GO:0008270">
    <property type="term" value="F:zinc ion binding"/>
    <property type="evidence" value="ECO:0007669"/>
    <property type="project" value="UniProtKB-UniRule"/>
</dbReference>
<dbReference type="GO" id="GO:0009972">
    <property type="term" value="P:cytidine deamination"/>
    <property type="evidence" value="ECO:0007669"/>
    <property type="project" value="InterPro"/>
</dbReference>
<dbReference type="CDD" id="cd01283">
    <property type="entry name" value="cytidine_deaminase"/>
    <property type="match status" value="1"/>
</dbReference>
<dbReference type="FunFam" id="3.40.140.10:FF:000007">
    <property type="entry name" value="Cytidine deaminase"/>
    <property type="match status" value="1"/>
</dbReference>
<dbReference type="Gene3D" id="3.40.140.10">
    <property type="entry name" value="Cytidine Deaminase, domain 2"/>
    <property type="match status" value="2"/>
</dbReference>
<dbReference type="HAMAP" id="MF_01558">
    <property type="entry name" value="Cyt_deam"/>
    <property type="match status" value="1"/>
</dbReference>
<dbReference type="InterPro" id="IPR016192">
    <property type="entry name" value="APOBEC/CMP_deaminase_Zn-bd"/>
</dbReference>
<dbReference type="InterPro" id="IPR002125">
    <property type="entry name" value="CMP_dCMP_dom"/>
</dbReference>
<dbReference type="InterPro" id="IPR013171">
    <property type="entry name" value="Cyd/dCyd_deaminase_Zn-bd"/>
</dbReference>
<dbReference type="InterPro" id="IPR050202">
    <property type="entry name" value="Cyt/Deoxycyt_deaminase"/>
</dbReference>
<dbReference type="InterPro" id="IPR016193">
    <property type="entry name" value="Cytidine_deaminase-like"/>
</dbReference>
<dbReference type="InterPro" id="IPR020797">
    <property type="entry name" value="Cytidine_deaminase_bacteria"/>
</dbReference>
<dbReference type="NCBIfam" id="NF006537">
    <property type="entry name" value="PRK09027.1"/>
    <property type="match status" value="1"/>
</dbReference>
<dbReference type="PANTHER" id="PTHR11644">
    <property type="entry name" value="CYTIDINE DEAMINASE"/>
    <property type="match status" value="1"/>
</dbReference>
<dbReference type="PANTHER" id="PTHR11644:SF2">
    <property type="entry name" value="CYTIDINE DEAMINASE"/>
    <property type="match status" value="1"/>
</dbReference>
<dbReference type="Pfam" id="PF00383">
    <property type="entry name" value="dCMP_cyt_deam_1"/>
    <property type="match status" value="1"/>
</dbReference>
<dbReference type="Pfam" id="PF08211">
    <property type="entry name" value="dCMP_cyt_deam_2"/>
    <property type="match status" value="1"/>
</dbReference>
<dbReference type="PIRSF" id="PIRSF006334">
    <property type="entry name" value="Cdd_plus_pseudo"/>
    <property type="match status" value="1"/>
</dbReference>
<dbReference type="SUPFAM" id="SSF53927">
    <property type="entry name" value="Cytidine deaminase-like"/>
    <property type="match status" value="2"/>
</dbReference>
<dbReference type="PROSITE" id="PS00903">
    <property type="entry name" value="CYT_DCMP_DEAMINASES_1"/>
    <property type="match status" value="1"/>
</dbReference>
<dbReference type="PROSITE" id="PS51747">
    <property type="entry name" value="CYT_DCMP_DEAMINASES_2"/>
    <property type="match status" value="2"/>
</dbReference>
<gene>
    <name evidence="1" type="primary">cdd</name>
    <name type="ordered locus">APJL_1361</name>
</gene>
<name>CDD_ACTPJ</name>